<protein>
    <recommendedName>
        <fullName evidence="1">Tyrosine recombinase XerC</fullName>
    </recommendedName>
</protein>
<gene>
    <name evidence="1" type="primary">xerC</name>
    <name type="ordered locus">XCC3497</name>
</gene>
<sequence>MPEAAPPVADARGSSPTATTGPGADATLSAVEPFLAHLQIERQVSAHTLDAYRRDLAALIGWASAQGSEDVAQLDSAQLRKFVTAEHRRGLSPKSLQRRLSACRSYYAWLLKHGRIATSPAAALRAPKAPRKLPQVLDADEAVRLVEVPTDAPLGLRDRALLELFYSSGLRLSELCALRWRDLDLDSGLVTVLGKGGKQRLVPVGSHAVAALRAWQRDSGGSAQTHVFPGRAGGAISQRAVQIRIKQLAVRQGMFKHVHPHMLRHSFASHILESSGDLRGVQELLGHSDIATTQIYTHLDFQHLAKVYDAAHPRAKRKKATE</sequence>
<dbReference type="EMBL" id="AE008922">
    <property type="protein sequence ID" value="AAM42767.1"/>
    <property type="molecule type" value="Genomic_DNA"/>
</dbReference>
<dbReference type="RefSeq" id="NP_638843.1">
    <property type="nucleotide sequence ID" value="NC_003902.1"/>
</dbReference>
<dbReference type="SMR" id="Q8P550"/>
<dbReference type="STRING" id="190485.XCC3497"/>
<dbReference type="EnsemblBacteria" id="AAM42767">
    <property type="protein sequence ID" value="AAM42767"/>
    <property type="gene ID" value="XCC3497"/>
</dbReference>
<dbReference type="KEGG" id="xcc:XCC3497"/>
<dbReference type="PATRIC" id="fig|190485.4.peg.3740"/>
<dbReference type="eggNOG" id="COG4973">
    <property type="taxonomic scope" value="Bacteria"/>
</dbReference>
<dbReference type="HOGENOM" id="CLU_027562_9_0_6"/>
<dbReference type="OrthoDB" id="9801717at2"/>
<dbReference type="Proteomes" id="UP000001010">
    <property type="component" value="Chromosome"/>
</dbReference>
<dbReference type="GO" id="GO:0005737">
    <property type="term" value="C:cytoplasm"/>
    <property type="evidence" value="ECO:0007669"/>
    <property type="project" value="UniProtKB-SubCell"/>
</dbReference>
<dbReference type="GO" id="GO:0048476">
    <property type="term" value="C:Holliday junction resolvase complex"/>
    <property type="evidence" value="ECO:0000318"/>
    <property type="project" value="GO_Central"/>
</dbReference>
<dbReference type="GO" id="GO:0003677">
    <property type="term" value="F:DNA binding"/>
    <property type="evidence" value="ECO:0000318"/>
    <property type="project" value="GO_Central"/>
</dbReference>
<dbReference type="GO" id="GO:0009037">
    <property type="term" value="F:tyrosine-based site-specific recombinase activity"/>
    <property type="evidence" value="ECO:0000318"/>
    <property type="project" value="GO_Central"/>
</dbReference>
<dbReference type="GO" id="GO:0051301">
    <property type="term" value="P:cell division"/>
    <property type="evidence" value="ECO:0007669"/>
    <property type="project" value="UniProtKB-KW"/>
</dbReference>
<dbReference type="GO" id="GO:0007059">
    <property type="term" value="P:chromosome segregation"/>
    <property type="evidence" value="ECO:0000318"/>
    <property type="project" value="GO_Central"/>
</dbReference>
<dbReference type="GO" id="GO:0006310">
    <property type="term" value="P:DNA recombination"/>
    <property type="evidence" value="ECO:0000318"/>
    <property type="project" value="GO_Central"/>
</dbReference>
<dbReference type="GO" id="GO:0006313">
    <property type="term" value="P:DNA transposition"/>
    <property type="evidence" value="ECO:0007669"/>
    <property type="project" value="UniProtKB-UniRule"/>
</dbReference>
<dbReference type="GO" id="GO:0071139">
    <property type="term" value="P:resolution of DNA recombination intermediates"/>
    <property type="evidence" value="ECO:0000318"/>
    <property type="project" value="GO_Central"/>
</dbReference>
<dbReference type="CDD" id="cd00798">
    <property type="entry name" value="INT_XerDC_C"/>
    <property type="match status" value="1"/>
</dbReference>
<dbReference type="Gene3D" id="1.10.150.130">
    <property type="match status" value="1"/>
</dbReference>
<dbReference type="Gene3D" id="1.10.443.10">
    <property type="entry name" value="Intergrase catalytic core"/>
    <property type="match status" value="1"/>
</dbReference>
<dbReference type="HAMAP" id="MF_01808">
    <property type="entry name" value="Recomb_XerC_XerD"/>
    <property type="match status" value="1"/>
</dbReference>
<dbReference type="InterPro" id="IPR044068">
    <property type="entry name" value="CB"/>
</dbReference>
<dbReference type="InterPro" id="IPR011010">
    <property type="entry name" value="DNA_brk_join_enz"/>
</dbReference>
<dbReference type="InterPro" id="IPR013762">
    <property type="entry name" value="Integrase-like_cat_sf"/>
</dbReference>
<dbReference type="InterPro" id="IPR002104">
    <property type="entry name" value="Integrase_catalytic"/>
</dbReference>
<dbReference type="InterPro" id="IPR010998">
    <property type="entry name" value="Integrase_recombinase_N"/>
</dbReference>
<dbReference type="InterPro" id="IPR004107">
    <property type="entry name" value="Integrase_SAM-like_N"/>
</dbReference>
<dbReference type="InterPro" id="IPR011931">
    <property type="entry name" value="Recomb_XerC"/>
</dbReference>
<dbReference type="InterPro" id="IPR023009">
    <property type="entry name" value="Tyrosine_recombinase_XerC/XerD"/>
</dbReference>
<dbReference type="InterPro" id="IPR050090">
    <property type="entry name" value="Tyrosine_recombinase_XerCD"/>
</dbReference>
<dbReference type="NCBIfam" id="NF001399">
    <property type="entry name" value="PRK00283.1"/>
    <property type="match status" value="1"/>
</dbReference>
<dbReference type="NCBIfam" id="TIGR02224">
    <property type="entry name" value="recomb_XerC"/>
    <property type="match status" value="1"/>
</dbReference>
<dbReference type="PANTHER" id="PTHR30349">
    <property type="entry name" value="PHAGE INTEGRASE-RELATED"/>
    <property type="match status" value="1"/>
</dbReference>
<dbReference type="PANTHER" id="PTHR30349:SF81">
    <property type="entry name" value="TYROSINE RECOMBINASE XERC"/>
    <property type="match status" value="1"/>
</dbReference>
<dbReference type="Pfam" id="PF02899">
    <property type="entry name" value="Phage_int_SAM_1"/>
    <property type="match status" value="1"/>
</dbReference>
<dbReference type="Pfam" id="PF00589">
    <property type="entry name" value="Phage_integrase"/>
    <property type="match status" value="1"/>
</dbReference>
<dbReference type="SUPFAM" id="SSF56349">
    <property type="entry name" value="DNA breaking-rejoining enzymes"/>
    <property type="match status" value="1"/>
</dbReference>
<dbReference type="PROSITE" id="PS51900">
    <property type="entry name" value="CB"/>
    <property type="match status" value="1"/>
</dbReference>
<dbReference type="PROSITE" id="PS51898">
    <property type="entry name" value="TYR_RECOMBINASE"/>
    <property type="match status" value="1"/>
</dbReference>
<proteinExistence type="inferred from homology"/>
<evidence type="ECO:0000255" key="1">
    <source>
        <dbReference type="HAMAP-Rule" id="MF_01808"/>
    </source>
</evidence>
<evidence type="ECO:0000255" key="2">
    <source>
        <dbReference type="PROSITE-ProRule" id="PRU01246"/>
    </source>
</evidence>
<evidence type="ECO:0000255" key="3">
    <source>
        <dbReference type="PROSITE-ProRule" id="PRU01248"/>
    </source>
</evidence>
<evidence type="ECO:0000256" key="4">
    <source>
        <dbReference type="SAM" id="MobiDB-lite"/>
    </source>
</evidence>
<reference key="1">
    <citation type="journal article" date="2002" name="Nature">
        <title>Comparison of the genomes of two Xanthomonas pathogens with differing host specificities.</title>
        <authorList>
            <person name="da Silva A.C.R."/>
            <person name="Ferro J.A."/>
            <person name="Reinach F.C."/>
            <person name="Farah C.S."/>
            <person name="Furlan L.R."/>
            <person name="Quaggio R.B."/>
            <person name="Monteiro-Vitorello C.B."/>
            <person name="Van Sluys M.A."/>
            <person name="Almeida N.F. Jr."/>
            <person name="Alves L.M.C."/>
            <person name="do Amaral A.M."/>
            <person name="Bertolini M.C."/>
            <person name="Camargo L.E.A."/>
            <person name="Camarotte G."/>
            <person name="Cannavan F."/>
            <person name="Cardozo J."/>
            <person name="Chambergo F."/>
            <person name="Ciapina L.P."/>
            <person name="Cicarelli R.M.B."/>
            <person name="Coutinho L.L."/>
            <person name="Cursino-Santos J.R."/>
            <person name="El-Dorry H."/>
            <person name="Faria J.B."/>
            <person name="Ferreira A.J.S."/>
            <person name="Ferreira R.C.C."/>
            <person name="Ferro M.I.T."/>
            <person name="Formighieri E.F."/>
            <person name="Franco M.C."/>
            <person name="Greggio C.C."/>
            <person name="Gruber A."/>
            <person name="Katsuyama A.M."/>
            <person name="Kishi L.T."/>
            <person name="Leite R.P."/>
            <person name="Lemos E.G.M."/>
            <person name="Lemos M.V.F."/>
            <person name="Locali E.C."/>
            <person name="Machado M.A."/>
            <person name="Madeira A.M.B.N."/>
            <person name="Martinez-Rossi N.M."/>
            <person name="Martins E.C."/>
            <person name="Meidanis J."/>
            <person name="Menck C.F.M."/>
            <person name="Miyaki C.Y."/>
            <person name="Moon D.H."/>
            <person name="Moreira L.M."/>
            <person name="Novo M.T.M."/>
            <person name="Okura V.K."/>
            <person name="Oliveira M.C."/>
            <person name="Oliveira V.R."/>
            <person name="Pereira H.A."/>
            <person name="Rossi A."/>
            <person name="Sena J.A.D."/>
            <person name="Silva C."/>
            <person name="de Souza R.F."/>
            <person name="Spinola L.A.F."/>
            <person name="Takita M.A."/>
            <person name="Tamura R.E."/>
            <person name="Teixeira E.C."/>
            <person name="Tezza R.I.D."/>
            <person name="Trindade dos Santos M."/>
            <person name="Truffi D."/>
            <person name="Tsai S.M."/>
            <person name="White F.F."/>
            <person name="Setubal J.C."/>
            <person name="Kitajima J.P."/>
        </authorList>
    </citation>
    <scope>NUCLEOTIDE SEQUENCE [LARGE SCALE GENOMIC DNA]</scope>
    <source>
        <strain>ATCC 33913 / DSM 3586 / NCPPB 528 / LMG 568 / P 25</strain>
    </source>
</reference>
<feature type="chain" id="PRO_0000095348" description="Tyrosine recombinase XerC">
    <location>
        <begin position="1"/>
        <end position="322"/>
    </location>
</feature>
<feature type="domain" description="Core-binding (CB)" evidence="3">
    <location>
        <begin position="25"/>
        <end position="111"/>
    </location>
</feature>
<feature type="domain" description="Tyr recombinase" evidence="2">
    <location>
        <begin position="132"/>
        <end position="309"/>
    </location>
</feature>
<feature type="region of interest" description="Disordered" evidence="4">
    <location>
        <begin position="1"/>
        <end position="25"/>
    </location>
</feature>
<feature type="compositionally biased region" description="Low complexity" evidence="4">
    <location>
        <begin position="16"/>
        <end position="25"/>
    </location>
</feature>
<feature type="active site" evidence="1">
    <location>
        <position position="171"/>
    </location>
</feature>
<feature type="active site" evidence="1">
    <location>
        <position position="195"/>
    </location>
</feature>
<feature type="active site" evidence="1">
    <location>
        <position position="261"/>
    </location>
</feature>
<feature type="active site" evidence="1">
    <location>
        <position position="264"/>
    </location>
</feature>
<feature type="active site" evidence="1">
    <location>
        <position position="287"/>
    </location>
</feature>
<feature type="active site" description="O-(3'-phospho-DNA)-tyrosine intermediate" evidence="1">
    <location>
        <position position="296"/>
    </location>
</feature>
<organism>
    <name type="scientific">Xanthomonas campestris pv. campestris (strain ATCC 33913 / DSM 3586 / NCPPB 528 / LMG 568 / P 25)</name>
    <dbReference type="NCBI Taxonomy" id="190485"/>
    <lineage>
        <taxon>Bacteria</taxon>
        <taxon>Pseudomonadati</taxon>
        <taxon>Pseudomonadota</taxon>
        <taxon>Gammaproteobacteria</taxon>
        <taxon>Lysobacterales</taxon>
        <taxon>Lysobacteraceae</taxon>
        <taxon>Xanthomonas</taxon>
    </lineage>
</organism>
<comment type="function">
    <text evidence="1">Site-specific tyrosine recombinase, which acts by catalyzing the cutting and rejoining of the recombining DNA molecules. The XerC-XerD complex is essential to convert dimers of the bacterial chromosome into monomers to permit their segregation at cell division. It also contributes to the segregational stability of plasmids.</text>
</comment>
<comment type="subunit">
    <text evidence="1">Forms a cyclic heterotetrameric complex composed of two molecules of XerC and two molecules of XerD.</text>
</comment>
<comment type="subcellular location">
    <subcellularLocation>
        <location evidence="1">Cytoplasm</location>
    </subcellularLocation>
</comment>
<comment type="similarity">
    <text evidence="1">Belongs to the 'phage' integrase family. XerC subfamily.</text>
</comment>
<name>XERC_XANCP</name>
<accession>Q8P550</accession>
<keyword id="KW-0131">Cell cycle</keyword>
<keyword id="KW-0132">Cell division</keyword>
<keyword id="KW-0159">Chromosome partition</keyword>
<keyword id="KW-0963">Cytoplasm</keyword>
<keyword id="KW-0229">DNA integration</keyword>
<keyword id="KW-0233">DNA recombination</keyword>
<keyword id="KW-0238">DNA-binding</keyword>
<keyword id="KW-1185">Reference proteome</keyword>